<organism>
    <name type="scientific">Conus victoriae</name>
    <name type="common">Queen Victoria cone</name>
    <dbReference type="NCBI Taxonomy" id="319920"/>
    <lineage>
        <taxon>Eukaryota</taxon>
        <taxon>Metazoa</taxon>
        <taxon>Spiralia</taxon>
        <taxon>Lophotrochozoa</taxon>
        <taxon>Mollusca</taxon>
        <taxon>Gastropoda</taxon>
        <taxon>Caenogastropoda</taxon>
        <taxon>Neogastropoda</taxon>
        <taxon>Conoidea</taxon>
        <taxon>Conidae</taxon>
        <taxon>Conus</taxon>
        <taxon>Cylinder</taxon>
    </lineage>
</organism>
<keyword id="KW-0165">Cleavage on pair of basic residues</keyword>
<keyword id="KW-1015">Disulfide bond</keyword>
<keyword id="KW-0872">Ion channel impairing toxin</keyword>
<keyword id="KW-0960">Knottin</keyword>
<keyword id="KW-0528">Neurotoxin</keyword>
<keyword id="KW-0964">Secreted</keyword>
<keyword id="KW-0732">Signal</keyword>
<keyword id="KW-0800">Toxin</keyword>
<sequence>MKLTCMVIVAVLFLTANTFVTAVPHSSNALENLYLKAHHEMNNPKDSELNKRCYDGGTGCDSGNQCCSGWCIFVCL</sequence>
<accession>P69763</accession>
<comment type="subcellular location">
    <subcellularLocation>
        <location evidence="1">Secreted</location>
    </subcellularLocation>
</comment>
<comment type="tissue specificity">
    <text>Expressed by the venom duct.</text>
</comment>
<comment type="domain">
    <text evidence="1">The presence of a 'disulfide through disulfide knot' structurally defines this protein as a knottin.</text>
</comment>
<comment type="domain">
    <text>The cysteine framework is VI/VII (C-C-CC-C-C).</text>
</comment>
<comment type="similarity">
    <text evidence="3">Belongs to the conotoxin O1 superfamily.</text>
</comment>
<dbReference type="ConoServer" id="1425">
    <property type="toxin name" value="Vc6.6 precursor"/>
</dbReference>
<dbReference type="GO" id="GO:0005576">
    <property type="term" value="C:extracellular region"/>
    <property type="evidence" value="ECO:0007669"/>
    <property type="project" value="UniProtKB-SubCell"/>
</dbReference>
<dbReference type="GO" id="GO:0008200">
    <property type="term" value="F:ion channel inhibitor activity"/>
    <property type="evidence" value="ECO:0007669"/>
    <property type="project" value="InterPro"/>
</dbReference>
<dbReference type="GO" id="GO:0090729">
    <property type="term" value="F:toxin activity"/>
    <property type="evidence" value="ECO:0007669"/>
    <property type="project" value="UniProtKB-KW"/>
</dbReference>
<dbReference type="InterPro" id="IPR004214">
    <property type="entry name" value="Conotoxin"/>
</dbReference>
<dbReference type="Pfam" id="PF02950">
    <property type="entry name" value="Conotoxin"/>
    <property type="match status" value="1"/>
</dbReference>
<reference key="1">
    <citation type="journal article" date="2004" name="J. Mass Spectrom.">
        <title>Determining sequences and post-translational modifications of novel conotoxins in Conus victoriae using cDNA sequencing and mass spectrometry.</title>
        <authorList>
            <person name="Jakubowski J.A."/>
            <person name="Keays D.A."/>
            <person name="Kelley W.P."/>
            <person name="Sandall D.W."/>
            <person name="Bingham J.-P."/>
            <person name="Livett B.G."/>
            <person name="Gayler K.R."/>
            <person name="Sweedler J.V."/>
        </authorList>
    </citation>
    <scope>NUCLEOTIDE SEQUENCE [MRNA]</scope>
    <source>
        <tissue>Venom duct</tissue>
    </source>
</reference>
<proteinExistence type="evidence at transcript level"/>
<feature type="signal peptide" evidence="2">
    <location>
        <begin position="1"/>
        <end position="22"/>
    </location>
</feature>
<feature type="propeptide" id="PRO_0000034976" evidence="1">
    <location>
        <begin position="23"/>
        <end position="52"/>
    </location>
</feature>
<feature type="peptide" id="PRO_0000034977" description="Conotoxin Vc6.6">
    <location>
        <begin position="53"/>
        <end position="76"/>
    </location>
</feature>
<feature type="disulfide bond" evidence="1">
    <location>
        <begin position="53"/>
        <end position="67"/>
    </location>
</feature>
<feature type="disulfide bond" evidence="1">
    <location>
        <begin position="60"/>
        <end position="71"/>
    </location>
</feature>
<feature type="disulfide bond" evidence="1">
    <location>
        <begin position="66"/>
        <end position="75"/>
    </location>
</feature>
<name>O166_CONVC</name>
<protein>
    <recommendedName>
        <fullName>Conotoxin Vc6.6</fullName>
    </recommendedName>
</protein>
<evidence type="ECO:0000250" key="1"/>
<evidence type="ECO:0000255" key="2"/>
<evidence type="ECO:0000305" key="3"/>